<sequence>MRYGFDIGGTKIELAVFNDQLEKQYSERVETPKESYEEWLNTIVRLVHKADEMFQCQGTVGLGIPGFVNPATGIAEIVNIRAADHKPIIQDLETRLGREVRAENDANCFALSEAWDEENAQYPSVLGLILGTGFGGGLIFNGKVHSGQTGMAGEVGHTQLNYHALRLLGGDNAPIYDCGCGNRACLDTYLSGRGFEMLYRDMQGEALSAQAIIQRFYAGDQSAVKFVELFIELCAISIGNLITVLDPHVIVLGGGLSNFDYLYEALPKALPARLLRSANVPLIKKAKYGDSGGVRGAAALFLSK</sequence>
<protein>
    <recommendedName>
        <fullName evidence="1">N-acetyl-D-glucosamine kinase</fullName>
        <ecNumber evidence="1">2.7.1.59</ecNumber>
    </recommendedName>
    <alternativeName>
        <fullName evidence="1">GlcNAc kinase</fullName>
    </alternativeName>
</protein>
<organism>
    <name type="scientific">Pasteurella multocida (strain Pm70)</name>
    <dbReference type="NCBI Taxonomy" id="272843"/>
    <lineage>
        <taxon>Bacteria</taxon>
        <taxon>Pseudomonadati</taxon>
        <taxon>Pseudomonadota</taxon>
        <taxon>Gammaproteobacteria</taxon>
        <taxon>Pasteurellales</taxon>
        <taxon>Pasteurellaceae</taxon>
        <taxon>Pasteurella</taxon>
    </lineage>
</organism>
<comment type="function">
    <text evidence="1">Catalyzes the phosphorylation of N-acetyl-D-glucosamine (GlcNAc) derived from cell-wall degradation, yielding GlcNAc-6-P.</text>
</comment>
<comment type="catalytic activity">
    <reaction evidence="1">
        <text>N-acetyl-D-glucosamine + ATP = N-acetyl-D-glucosamine 6-phosphate + ADP + H(+)</text>
        <dbReference type="Rhea" id="RHEA:17417"/>
        <dbReference type="ChEBI" id="CHEBI:15378"/>
        <dbReference type="ChEBI" id="CHEBI:30616"/>
        <dbReference type="ChEBI" id="CHEBI:57513"/>
        <dbReference type="ChEBI" id="CHEBI:456216"/>
        <dbReference type="ChEBI" id="CHEBI:506227"/>
        <dbReference type="EC" id="2.7.1.59"/>
    </reaction>
</comment>
<comment type="pathway">
    <text evidence="1">Cell wall biogenesis; peptidoglycan recycling.</text>
</comment>
<comment type="similarity">
    <text evidence="1">Belongs to the ROK (NagC/XylR) family. NagK subfamily.</text>
</comment>
<proteinExistence type="inferred from homology"/>
<keyword id="KW-0067">ATP-binding</keyword>
<keyword id="KW-0119">Carbohydrate metabolism</keyword>
<keyword id="KW-0418">Kinase</keyword>
<keyword id="KW-0479">Metal-binding</keyword>
<keyword id="KW-0547">Nucleotide-binding</keyword>
<keyword id="KW-1185">Reference proteome</keyword>
<keyword id="KW-0808">Transferase</keyword>
<keyword id="KW-0862">Zinc</keyword>
<dbReference type="EC" id="2.7.1.59" evidence="1"/>
<dbReference type="EMBL" id="AE004439">
    <property type="protein sequence ID" value="AAK02759.1"/>
    <property type="molecule type" value="Genomic_DNA"/>
</dbReference>
<dbReference type="RefSeq" id="WP_005726560.1">
    <property type="nucleotide sequence ID" value="NC_002663.1"/>
</dbReference>
<dbReference type="SMR" id="Q9CMX5"/>
<dbReference type="STRING" id="272843.PM0675"/>
<dbReference type="EnsemblBacteria" id="AAK02759">
    <property type="protein sequence ID" value="AAK02759"/>
    <property type="gene ID" value="PM0675"/>
</dbReference>
<dbReference type="GeneID" id="77207901"/>
<dbReference type="KEGG" id="pmu:PM0675"/>
<dbReference type="HOGENOM" id="CLU_036604_0_3_6"/>
<dbReference type="OrthoDB" id="9810372at2"/>
<dbReference type="UniPathway" id="UPA00544"/>
<dbReference type="Proteomes" id="UP000000809">
    <property type="component" value="Chromosome"/>
</dbReference>
<dbReference type="GO" id="GO:0005524">
    <property type="term" value="F:ATP binding"/>
    <property type="evidence" value="ECO:0007669"/>
    <property type="project" value="UniProtKB-UniRule"/>
</dbReference>
<dbReference type="GO" id="GO:0045127">
    <property type="term" value="F:N-acetylglucosamine kinase activity"/>
    <property type="evidence" value="ECO:0007669"/>
    <property type="project" value="UniProtKB-UniRule"/>
</dbReference>
<dbReference type="GO" id="GO:0008270">
    <property type="term" value="F:zinc ion binding"/>
    <property type="evidence" value="ECO:0007669"/>
    <property type="project" value="UniProtKB-UniRule"/>
</dbReference>
<dbReference type="GO" id="GO:0006044">
    <property type="term" value="P:N-acetylglucosamine metabolic process"/>
    <property type="evidence" value="ECO:0007669"/>
    <property type="project" value="UniProtKB-UniRule"/>
</dbReference>
<dbReference type="GO" id="GO:0009254">
    <property type="term" value="P:peptidoglycan turnover"/>
    <property type="evidence" value="ECO:0007669"/>
    <property type="project" value="UniProtKB-UniRule"/>
</dbReference>
<dbReference type="CDD" id="cd24057">
    <property type="entry name" value="ASKHA_NBD_ROK_NAGK"/>
    <property type="match status" value="1"/>
</dbReference>
<dbReference type="Gene3D" id="3.30.420.40">
    <property type="match status" value="2"/>
</dbReference>
<dbReference type="HAMAP" id="MF_01271">
    <property type="entry name" value="GlcNAc_kinase"/>
    <property type="match status" value="1"/>
</dbReference>
<dbReference type="InterPro" id="IPR043129">
    <property type="entry name" value="ATPase_NBD"/>
</dbReference>
<dbReference type="InterPro" id="IPR023505">
    <property type="entry name" value="N-acetyl-D-glucosamine_kinase"/>
</dbReference>
<dbReference type="InterPro" id="IPR000600">
    <property type="entry name" value="ROK"/>
</dbReference>
<dbReference type="InterPro" id="IPR049874">
    <property type="entry name" value="ROK_cs"/>
</dbReference>
<dbReference type="NCBIfam" id="NF009835">
    <property type="entry name" value="PRK13310.1"/>
    <property type="match status" value="1"/>
</dbReference>
<dbReference type="PANTHER" id="PTHR18964:SF162">
    <property type="entry name" value="N-ACETYL-D-GLUCOSAMINE KINASE"/>
    <property type="match status" value="1"/>
</dbReference>
<dbReference type="PANTHER" id="PTHR18964">
    <property type="entry name" value="ROK (REPRESSOR, ORF, KINASE) FAMILY"/>
    <property type="match status" value="1"/>
</dbReference>
<dbReference type="Pfam" id="PF00480">
    <property type="entry name" value="ROK"/>
    <property type="match status" value="1"/>
</dbReference>
<dbReference type="SUPFAM" id="SSF53067">
    <property type="entry name" value="Actin-like ATPase domain"/>
    <property type="match status" value="1"/>
</dbReference>
<dbReference type="PROSITE" id="PS01125">
    <property type="entry name" value="ROK"/>
    <property type="match status" value="1"/>
</dbReference>
<evidence type="ECO:0000255" key="1">
    <source>
        <dbReference type="HAMAP-Rule" id="MF_01271"/>
    </source>
</evidence>
<feature type="chain" id="PRO_0000270109" description="N-acetyl-D-glucosamine kinase">
    <location>
        <begin position="1"/>
        <end position="304"/>
    </location>
</feature>
<feature type="binding site" evidence="1">
    <location>
        <begin position="4"/>
        <end position="11"/>
    </location>
    <ligand>
        <name>ATP</name>
        <dbReference type="ChEBI" id="CHEBI:30616"/>
    </ligand>
</feature>
<feature type="binding site" evidence="1">
    <location>
        <begin position="133"/>
        <end position="140"/>
    </location>
    <ligand>
        <name>ATP</name>
        <dbReference type="ChEBI" id="CHEBI:30616"/>
    </ligand>
</feature>
<feature type="binding site" evidence="1">
    <location>
        <position position="157"/>
    </location>
    <ligand>
        <name>Zn(2+)</name>
        <dbReference type="ChEBI" id="CHEBI:29105"/>
    </ligand>
</feature>
<feature type="binding site" evidence="1">
    <location>
        <position position="178"/>
    </location>
    <ligand>
        <name>Zn(2+)</name>
        <dbReference type="ChEBI" id="CHEBI:29105"/>
    </ligand>
</feature>
<feature type="binding site" evidence="1">
    <location>
        <position position="180"/>
    </location>
    <ligand>
        <name>Zn(2+)</name>
        <dbReference type="ChEBI" id="CHEBI:29105"/>
    </ligand>
</feature>
<feature type="binding site" evidence="1">
    <location>
        <position position="185"/>
    </location>
    <ligand>
        <name>Zn(2+)</name>
        <dbReference type="ChEBI" id="CHEBI:29105"/>
    </ligand>
</feature>
<accession>Q9CMX5</accession>
<gene>
    <name evidence="1" type="primary">nagK</name>
    <name type="ordered locus">PM0675</name>
</gene>
<reference key="1">
    <citation type="journal article" date="2001" name="Proc. Natl. Acad. Sci. U.S.A.">
        <title>Complete genomic sequence of Pasteurella multocida Pm70.</title>
        <authorList>
            <person name="May B.J."/>
            <person name="Zhang Q."/>
            <person name="Li L.L."/>
            <person name="Paustian M.L."/>
            <person name="Whittam T.S."/>
            <person name="Kapur V."/>
        </authorList>
    </citation>
    <scope>NUCLEOTIDE SEQUENCE [LARGE SCALE GENOMIC DNA]</scope>
    <source>
        <strain>Pm70</strain>
    </source>
</reference>
<name>NAGK_PASMU</name>